<name>KAS1_STRHA</name>
<comment type="function">
    <text>Involved in developmentally regulated synthesis of a compound biosynthetically related to polyketide antibiotics which is essential for spore color in Streptomyces halstedii.</text>
</comment>
<comment type="similarity">
    <text evidence="2">Belongs to the thiolase-like superfamily. Beta-ketoacyl-ACP synthases family.</text>
</comment>
<keyword id="KW-0012">Acyltransferase</keyword>
<keyword id="KW-0808">Transferase</keyword>
<evidence type="ECO:0000255" key="1">
    <source>
        <dbReference type="PROSITE-ProRule" id="PRU01348"/>
    </source>
</evidence>
<evidence type="ECO:0000305" key="2"/>
<reference key="1">
    <citation type="journal article" date="1993" name="Gene">
        <title>Hybridization and DNA sequence analyses suggest an early evolutionary divergence of related biosynthetic gene sets encoding polyketide antibiotics and spore pigments in Streptomyces spp.</title>
        <authorList>
            <person name="Blanco G."/>
            <person name="Brian P."/>
            <person name="Pereda A."/>
            <person name="Mendez C."/>
            <person name="Salas J.A."/>
            <person name="Chater K.F."/>
        </authorList>
    </citation>
    <scope>NUCLEOTIDE SEQUENCE [GENOMIC DNA]</scope>
    <source>
        <strain>NRRL 2381</strain>
    </source>
</reference>
<organism>
    <name type="scientific">Streptomyces halstedii</name>
    <dbReference type="NCBI Taxonomy" id="1944"/>
    <lineage>
        <taxon>Bacteria</taxon>
        <taxon>Bacillati</taxon>
        <taxon>Actinomycetota</taxon>
        <taxon>Actinomycetes</taxon>
        <taxon>Kitasatosporales</taxon>
        <taxon>Streptomycetaceae</taxon>
        <taxon>Streptomyces</taxon>
    </lineage>
</organism>
<accession>Q05356</accession>
<dbReference type="EC" id="2.3.1.-"/>
<dbReference type="EMBL" id="L05390">
    <property type="protein sequence ID" value="AAA02833.1"/>
    <property type="molecule type" value="Genomic_DNA"/>
</dbReference>
<dbReference type="PIR" id="JN0825">
    <property type="entry name" value="JN0825"/>
</dbReference>
<dbReference type="SMR" id="Q05356"/>
<dbReference type="GO" id="GO:0005829">
    <property type="term" value="C:cytosol"/>
    <property type="evidence" value="ECO:0007669"/>
    <property type="project" value="TreeGrafter"/>
</dbReference>
<dbReference type="GO" id="GO:0004315">
    <property type="term" value="F:3-oxoacyl-[acyl-carrier-protein] synthase activity"/>
    <property type="evidence" value="ECO:0007669"/>
    <property type="project" value="InterPro"/>
</dbReference>
<dbReference type="GO" id="GO:0006633">
    <property type="term" value="P:fatty acid biosynthetic process"/>
    <property type="evidence" value="ECO:0007669"/>
    <property type="project" value="InterPro"/>
</dbReference>
<dbReference type="CDD" id="cd00834">
    <property type="entry name" value="KAS_I_II"/>
    <property type="match status" value="1"/>
</dbReference>
<dbReference type="FunFam" id="3.40.47.10:FF:000029">
    <property type="entry name" value="3-oxoacyl-[acyl-carrier-protein] synthase 1"/>
    <property type="match status" value="1"/>
</dbReference>
<dbReference type="FunFam" id="3.40.47.10:FF:000018">
    <property type="entry name" value="3-oxoacyl-[acyl-carrier-protein] synthase 2"/>
    <property type="match status" value="1"/>
</dbReference>
<dbReference type="Gene3D" id="3.40.47.10">
    <property type="match status" value="2"/>
</dbReference>
<dbReference type="InterPro" id="IPR000794">
    <property type="entry name" value="Beta-ketoacyl_synthase"/>
</dbReference>
<dbReference type="InterPro" id="IPR018201">
    <property type="entry name" value="Ketoacyl_synth_AS"/>
</dbReference>
<dbReference type="InterPro" id="IPR014031">
    <property type="entry name" value="Ketoacyl_synth_C"/>
</dbReference>
<dbReference type="InterPro" id="IPR014030">
    <property type="entry name" value="Ketoacyl_synth_N"/>
</dbReference>
<dbReference type="InterPro" id="IPR020841">
    <property type="entry name" value="PKS_Beta-ketoAc_synthase_dom"/>
</dbReference>
<dbReference type="InterPro" id="IPR016039">
    <property type="entry name" value="Thiolase-like"/>
</dbReference>
<dbReference type="NCBIfam" id="NF005589">
    <property type="entry name" value="PRK07314.1"/>
    <property type="match status" value="1"/>
</dbReference>
<dbReference type="PANTHER" id="PTHR11712:SF336">
    <property type="entry name" value="3-OXOACYL-[ACYL-CARRIER-PROTEIN] SYNTHASE, MITOCHONDRIAL"/>
    <property type="match status" value="1"/>
</dbReference>
<dbReference type="PANTHER" id="PTHR11712">
    <property type="entry name" value="POLYKETIDE SYNTHASE-RELATED"/>
    <property type="match status" value="1"/>
</dbReference>
<dbReference type="Pfam" id="PF00109">
    <property type="entry name" value="ketoacyl-synt"/>
    <property type="match status" value="1"/>
</dbReference>
<dbReference type="Pfam" id="PF02801">
    <property type="entry name" value="Ketoacyl-synt_C"/>
    <property type="match status" value="1"/>
</dbReference>
<dbReference type="SMART" id="SM00825">
    <property type="entry name" value="PKS_KS"/>
    <property type="match status" value="1"/>
</dbReference>
<dbReference type="SUPFAM" id="SSF53901">
    <property type="entry name" value="Thiolase-like"/>
    <property type="match status" value="2"/>
</dbReference>
<dbReference type="PROSITE" id="PS00606">
    <property type="entry name" value="KS3_1"/>
    <property type="match status" value="1"/>
</dbReference>
<dbReference type="PROSITE" id="PS52004">
    <property type="entry name" value="KS3_2"/>
    <property type="match status" value="1"/>
</dbReference>
<protein>
    <recommendedName>
        <fullName>Putative polyketide beta-ketoacyl synthase 1</fullName>
        <shortName>KS</shortName>
        <ecNumber>2.3.1.-</ecNumber>
    </recommendedName>
    <alternativeName>
        <fullName>Polyketide condensing enzyme</fullName>
    </alternativeName>
</protein>
<sequence length="422" mass="44986">MSRRVVVTGIGVVAPGGIGAARFWDLLAGGRTATRRISLFDPARLRSQIAAECDFDPSAHGLDDETVRRCDRYVQFALVATAEAVRDAGLDTTREDPWRMGAVLGTAVGGTTRLEHDYVLVSEGGSRWDVDHRRAEPHLHRAFAPSTLASTVAETFGAQGPVQTVSTGCTSGLDAVGYAYHAIAEGRADVCLAGASDSPISPITMACFDAIKATSPSNDDPEHASRPFDARRNGFVMGEGGAVLVLEELEHARARGADVYCELAGYATFGNAHHMTGLTREGLEMARAIDTALDMARLDGTDIDYVNAHGSGTQQNDRHETAAVKRSLGEHAYRTPMSSIKSMVGHSLGAIGSIEVVACVLALAHQVVPPTANYETPDPECDLDYVPREARERELRSVLSVGSGFGGFQSAVVLTGPERRLR</sequence>
<gene>
    <name type="primary">sch1</name>
</gene>
<proteinExistence type="inferred from homology"/>
<feature type="chain" id="PRO_0000180338" description="Putative polyketide beta-ketoacyl synthase 1">
    <location>
        <begin position="1"/>
        <end position="422"/>
    </location>
</feature>
<feature type="domain" description="Ketosynthase family 3 (KS3)" evidence="1">
    <location>
        <begin position="2"/>
        <end position="416"/>
    </location>
</feature>
<feature type="active site" description="For beta-ketoacyl synthase activity" evidence="1">
    <location>
        <position position="169"/>
    </location>
</feature>
<feature type="active site" description="For beta-ketoacyl synthase activity" evidence="1">
    <location>
        <position position="309"/>
    </location>
</feature>
<feature type="active site" description="For beta-ketoacyl synthase activity" evidence="1">
    <location>
        <position position="346"/>
    </location>
</feature>